<reference key="1">
    <citation type="journal article" date="2006" name="Lancet">
        <title>Complete genome sequence of USA300, an epidemic clone of community-acquired meticillin-resistant Staphylococcus aureus.</title>
        <authorList>
            <person name="Diep B.A."/>
            <person name="Gill S.R."/>
            <person name="Chang R.F."/>
            <person name="Phan T.H."/>
            <person name="Chen J.H."/>
            <person name="Davidson M.G."/>
            <person name="Lin F."/>
            <person name="Lin J."/>
            <person name="Carleton H.A."/>
            <person name="Mongodin E.F."/>
            <person name="Sensabaugh G.F."/>
            <person name="Perdreau-Remington F."/>
        </authorList>
    </citation>
    <scope>NUCLEOTIDE SEQUENCE [LARGE SCALE GENOMIC DNA]</scope>
    <source>
        <strain>USA300</strain>
    </source>
</reference>
<comment type="function">
    <text evidence="1">Responsible for synthesis of pseudouridine from uracil-55 in the psi GC loop of transfer RNAs.</text>
</comment>
<comment type="catalytic activity">
    <reaction evidence="1">
        <text>uridine(55) in tRNA = pseudouridine(55) in tRNA</text>
        <dbReference type="Rhea" id="RHEA:42532"/>
        <dbReference type="Rhea" id="RHEA-COMP:10101"/>
        <dbReference type="Rhea" id="RHEA-COMP:10102"/>
        <dbReference type="ChEBI" id="CHEBI:65314"/>
        <dbReference type="ChEBI" id="CHEBI:65315"/>
        <dbReference type="EC" id="5.4.99.25"/>
    </reaction>
</comment>
<comment type="similarity">
    <text evidence="1">Belongs to the pseudouridine synthase TruB family. Type 1 subfamily.</text>
</comment>
<sequence length="305" mass="34593">MYNGILPVYKERGLTSHDVVFKLRKILKTKKIGHTGTLDPEVAGVLPVCIGNATRVSDYVMDMGKAYEATVSIGRSTTTEDQTGDTLETKGVHSADFNKDDIDRLLESFKGIIEQIPPMYSSVKVNGKKLYEYARNNETVERPKRKVNIKDIGRISELDFKENECHFKIRVICGKGTYIRTLATDIGVKLGFPAHMSKLTRIESGGFVLKDSLTLEQIKELHEQDSLQNKLFPLEYGLKGLPSIKIKDSHIKKRILNGQKFNKNEFDNKIKDQIVFIDDDSEKVLAIYMVHPTKESEIKPKKVFN</sequence>
<protein>
    <recommendedName>
        <fullName evidence="1">tRNA pseudouridine synthase B</fullName>
        <ecNumber evidence="1">5.4.99.25</ecNumber>
    </recommendedName>
    <alternativeName>
        <fullName evidence="1">tRNA pseudouridine(55) synthase</fullName>
        <shortName evidence="1">Psi55 synthase</shortName>
    </alternativeName>
    <alternativeName>
        <fullName evidence="1">tRNA pseudouridylate synthase</fullName>
    </alternativeName>
    <alternativeName>
        <fullName evidence="1">tRNA-uridine isomerase</fullName>
    </alternativeName>
</protein>
<name>TRUB_STAA3</name>
<dbReference type="EC" id="5.4.99.25" evidence="1"/>
<dbReference type="EMBL" id="CP000255">
    <property type="protein sequence ID" value="ABD21442.1"/>
    <property type="molecule type" value="Genomic_DNA"/>
</dbReference>
<dbReference type="RefSeq" id="WP_000282305.1">
    <property type="nucleotide sequence ID" value="NZ_CP027476.1"/>
</dbReference>
<dbReference type="SMR" id="Q2FHG7"/>
<dbReference type="KEGG" id="saa:SAUSA300_1164"/>
<dbReference type="HOGENOM" id="CLU_032087_0_1_9"/>
<dbReference type="OMA" id="VDKPSGF"/>
<dbReference type="Proteomes" id="UP000001939">
    <property type="component" value="Chromosome"/>
</dbReference>
<dbReference type="GO" id="GO:0003723">
    <property type="term" value="F:RNA binding"/>
    <property type="evidence" value="ECO:0007669"/>
    <property type="project" value="InterPro"/>
</dbReference>
<dbReference type="GO" id="GO:0160148">
    <property type="term" value="F:tRNA pseudouridine(55) synthase activity"/>
    <property type="evidence" value="ECO:0007669"/>
    <property type="project" value="UniProtKB-EC"/>
</dbReference>
<dbReference type="GO" id="GO:1990481">
    <property type="term" value="P:mRNA pseudouridine synthesis"/>
    <property type="evidence" value="ECO:0007669"/>
    <property type="project" value="TreeGrafter"/>
</dbReference>
<dbReference type="GO" id="GO:0031119">
    <property type="term" value="P:tRNA pseudouridine synthesis"/>
    <property type="evidence" value="ECO:0007669"/>
    <property type="project" value="UniProtKB-UniRule"/>
</dbReference>
<dbReference type="CDD" id="cd02573">
    <property type="entry name" value="PseudoU_synth_EcTruB"/>
    <property type="match status" value="1"/>
</dbReference>
<dbReference type="FunFam" id="3.30.2350.10:FF:000011">
    <property type="entry name" value="tRNA pseudouridine synthase B"/>
    <property type="match status" value="1"/>
</dbReference>
<dbReference type="Gene3D" id="3.30.2350.10">
    <property type="entry name" value="Pseudouridine synthase"/>
    <property type="match status" value="1"/>
</dbReference>
<dbReference type="HAMAP" id="MF_01080">
    <property type="entry name" value="TruB_bact"/>
    <property type="match status" value="1"/>
</dbReference>
<dbReference type="InterPro" id="IPR020103">
    <property type="entry name" value="PsdUridine_synth_cat_dom_sf"/>
</dbReference>
<dbReference type="InterPro" id="IPR002501">
    <property type="entry name" value="PsdUridine_synth_N"/>
</dbReference>
<dbReference type="InterPro" id="IPR014780">
    <property type="entry name" value="tRNA_psdUridine_synth_TruB"/>
</dbReference>
<dbReference type="InterPro" id="IPR032819">
    <property type="entry name" value="TruB_C"/>
</dbReference>
<dbReference type="NCBIfam" id="TIGR00431">
    <property type="entry name" value="TruB"/>
    <property type="match status" value="1"/>
</dbReference>
<dbReference type="PANTHER" id="PTHR13767:SF2">
    <property type="entry name" value="PSEUDOURIDYLATE SYNTHASE TRUB1"/>
    <property type="match status" value="1"/>
</dbReference>
<dbReference type="PANTHER" id="PTHR13767">
    <property type="entry name" value="TRNA-PSEUDOURIDINE SYNTHASE"/>
    <property type="match status" value="1"/>
</dbReference>
<dbReference type="Pfam" id="PF16198">
    <property type="entry name" value="TruB_C_2"/>
    <property type="match status" value="1"/>
</dbReference>
<dbReference type="Pfam" id="PF01509">
    <property type="entry name" value="TruB_N"/>
    <property type="match status" value="1"/>
</dbReference>
<dbReference type="SUPFAM" id="SSF55120">
    <property type="entry name" value="Pseudouridine synthase"/>
    <property type="match status" value="1"/>
</dbReference>
<evidence type="ECO:0000255" key="1">
    <source>
        <dbReference type="HAMAP-Rule" id="MF_01080"/>
    </source>
</evidence>
<feature type="chain" id="PRO_1000084690" description="tRNA pseudouridine synthase B">
    <location>
        <begin position="1"/>
        <end position="305"/>
    </location>
</feature>
<feature type="active site" description="Nucleophile" evidence="1">
    <location>
        <position position="39"/>
    </location>
</feature>
<proteinExistence type="inferred from homology"/>
<keyword id="KW-0413">Isomerase</keyword>
<keyword id="KW-0819">tRNA processing</keyword>
<organism>
    <name type="scientific">Staphylococcus aureus (strain USA300)</name>
    <dbReference type="NCBI Taxonomy" id="367830"/>
    <lineage>
        <taxon>Bacteria</taxon>
        <taxon>Bacillati</taxon>
        <taxon>Bacillota</taxon>
        <taxon>Bacilli</taxon>
        <taxon>Bacillales</taxon>
        <taxon>Staphylococcaceae</taxon>
        <taxon>Staphylococcus</taxon>
    </lineage>
</organism>
<accession>Q2FHG7</accession>
<gene>
    <name evidence="1" type="primary">truB</name>
    <name type="ordered locus">SAUSA300_1164</name>
</gene>